<evidence type="ECO:0000250" key="1">
    <source>
        <dbReference type="UniProtKB" id="A6QPC0"/>
    </source>
</evidence>
<evidence type="ECO:0000256" key="2">
    <source>
        <dbReference type="SAM" id="MobiDB-lite"/>
    </source>
</evidence>
<evidence type="ECO:0000269" key="3">
    <source>
    </source>
</evidence>
<evidence type="ECO:0000269" key="4">
    <source>
    </source>
</evidence>
<evidence type="ECO:0000303" key="5">
    <source>
    </source>
</evidence>
<evidence type="ECO:0000305" key="6"/>
<evidence type="ECO:0007744" key="7">
    <source>
        <dbReference type="PDB" id="8IYJ"/>
    </source>
</evidence>
<name>SMIP5_MOUSE</name>
<protein>
    <recommendedName>
        <fullName>Sperm-associated microtubule inner protein 5</fullName>
    </recommendedName>
</protein>
<sequence length="229" mass="25817">MESPKTFMRKLPITPGYCGFIPWLSCQESSSEDRMNPCVKAFQERTQRYKEDQQGLNCSVANTPPLKPICSEDTVLWVLHEYAKKYHPLTLECKNEKKPLQEPPIPGWAGYLPRARVTEFGYATRYTIMAKKCYKDFLDLVEQAKRAQLKPYEQTYDVRAAQPLSPSSKILQLQGLSPAFPEFSGPGQTPPSEDPQAPRPCGCAQWSSQSCSRNVYGEPPSLAKAFAES</sequence>
<proteinExistence type="evidence at protein level"/>
<feature type="chain" id="PRO_0000358916" description="Sperm-associated microtubule inner protein 5">
    <location>
        <begin position="1"/>
        <end position="229"/>
    </location>
</feature>
<feature type="region of interest" description="Disordered" evidence="2">
    <location>
        <begin position="181"/>
        <end position="201"/>
    </location>
</feature>
<organism>
    <name type="scientific">Mus musculus</name>
    <name type="common">Mouse</name>
    <dbReference type="NCBI Taxonomy" id="10090"/>
    <lineage>
        <taxon>Eukaryota</taxon>
        <taxon>Metazoa</taxon>
        <taxon>Chordata</taxon>
        <taxon>Craniata</taxon>
        <taxon>Vertebrata</taxon>
        <taxon>Euteleostomi</taxon>
        <taxon>Mammalia</taxon>
        <taxon>Eutheria</taxon>
        <taxon>Euarchontoglires</taxon>
        <taxon>Glires</taxon>
        <taxon>Rodentia</taxon>
        <taxon>Myomorpha</taxon>
        <taxon>Muroidea</taxon>
        <taxon>Muridae</taxon>
        <taxon>Murinae</taxon>
        <taxon>Mus</taxon>
        <taxon>Mus</taxon>
    </lineage>
</organism>
<keyword id="KW-0002">3D-structure</keyword>
<keyword id="KW-0966">Cell projection</keyword>
<keyword id="KW-0969">Cilium</keyword>
<keyword id="KW-0963">Cytoplasm</keyword>
<keyword id="KW-0206">Cytoskeleton</keyword>
<keyword id="KW-0282">Flagellum</keyword>
<keyword id="KW-0539">Nucleus</keyword>
<keyword id="KW-1185">Reference proteome</keyword>
<gene>
    <name type="primary">Spmip5</name>
    <name evidence="5" type="synonym">Fam166d</name>
</gene>
<dbReference type="EMBL" id="AK006135">
    <property type="protein sequence ID" value="BAB24426.1"/>
    <property type="status" value="ALT_INIT"/>
    <property type="molecule type" value="mRNA"/>
</dbReference>
<dbReference type="EMBL" id="AK006423">
    <property type="protein sequence ID" value="BAB24581.1"/>
    <property type="status" value="ALT_INIT"/>
    <property type="molecule type" value="mRNA"/>
</dbReference>
<dbReference type="EMBL" id="AC127545">
    <property type="status" value="NOT_ANNOTATED_CDS"/>
    <property type="molecule type" value="Genomic_DNA"/>
</dbReference>
<dbReference type="EMBL" id="CH466585">
    <property type="protein sequence ID" value="EDL01810.1"/>
    <property type="molecule type" value="Genomic_DNA"/>
</dbReference>
<dbReference type="EMBL" id="BC049561">
    <property type="protein sequence ID" value="AAH49561.1"/>
    <property type="status" value="ALT_INIT"/>
    <property type="molecule type" value="mRNA"/>
</dbReference>
<dbReference type="CCDS" id="CCDS89423.1"/>
<dbReference type="RefSeq" id="NP_001355617.1">
    <property type="nucleotide sequence ID" value="NM_001368688.1"/>
</dbReference>
<dbReference type="RefSeq" id="NP_001355618.1">
    <property type="nucleotide sequence ID" value="NM_001368689.1"/>
</dbReference>
<dbReference type="RefSeq" id="NP_080484.1">
    <property type="nucleotide sequence ID" value="NM_026208.2"/>
</dbReference>
<dbReference type="RefSeq" id="XP_006527359.1">
    <property type="nucleotide sequence ID" value="XM_006527296.3"/>
</dbReference>
<dbReference type="RefSeq" id="XP_017173768.1">
    <property type="nucleotide sequence ID" value="XM_017318279.1"/>
</dbReference>
<dbReference type="PDB" id="8IYJ">
    <property type="method" value="EM"/>
    <property type="resolution" value="3.50 A"/>
    <property type="chains" value="a1/a2/a3/a4=1-229"/>
</dbReference>
<dbReference type="PDBsum" id="8IYJ"/>
<dbReference type="EMDB" id="EMD-35823"/>
<dbReference type="SMR" id="Q9CQT6"/>
<dbReference type="BioGRID" id="212236">
    <property type="interactions" value="1"/>
</dbReference>
<dbReference type="FunCoup" id="Q9CQT6">
    <property type="interactions" value="1"/>
</dbReference>
<dbReference type="STRING" id="10090.ENSMUSP00000028299"/>
<dbReference type="PaxDb" id="10090-ENSMUSP00000028299"/>
<dbReference type="Antibodypedia" id="53097">
    <property type="antibodies" value="62 antibodies from 11 providers"/>
</dbReference>
<dbReference type="DNASU" id="67507"/>
<dbReference type="Ensembl" id="ENSMUST00000166692.2">
    <property type="protein sequence ID" value="ENSMUSP00000126241.2"/>
    <property type="gene ID" value="ENSMUSG00000026931.11"/>
</dbReference>
<dbReference type="GeneID" id="67507"/>
<dbReference type="KEGG" id="mmu:67507"/>
<dbReference type="UCSC" id="uc008iav.1">
    <property type="organism name" value="mouse"/>
</dbReference>
<dbReference type="AGR" id="MGI:1914757"/>
<dbReference type="CTD" id="143379"/>
<dbReference type="MGI" id="MGI:1914757">
    <property type="gene designation" value="Spmip5"/>
</dbReference>
<dbReference type="VEuPathDB" id="HostDB:ENSMUSG00000026931"/>
<dbReference type="eggNOG" id="ENOG502SAX8">
    <property type="taxonomic scope" value="Eukaryota"/>
</dbReference>
<dbReference type="GeneTree" id="ENSGT00390000017460"/>
<dbReference type="HOGENOM" id="CLU_1207231_0_0_1"/>
<dbReference type="InParanoid" id="Q9CQT6"/>
<dbReference type="OMA" id="PGWAGFL"/>
<dbReference type="OrthoDB" id="2019884at2759"/>
<dbReference type="PhylomeDB" id="Q9CQT6"/>
<dbReference type="TreeFam" id="TF337656"/>
<dbReference type="BioGRID-ORCS" id="67507">
    <property type="hits" value="3 hits in 78 CRISPR screens"/>
</dbReference>
<dbReference type="PRO" id="PR:Q9CQT6"/>
<dbReference type="Proteomes" id="UP000000589">
    <property type="component" value="Chromosome 19"/>
</dbReference>
<dbReference type="RNAct" id="Q9CQT6">
    <property type="molecule type" value="protein"/>
</dbReference>
<dbReference type="Bgee" id="ENSMUSG00000026931">
    <property type="expression patterns" value="Expressed in seminiferous tubule of testis and 11 other cell types or tissues"/>
</dbReference>
<dbReference type="ExpressionAtlas" id="Q9CQT6">
    <property type="expression patterns" value="baseline and differential"/>
</dbReference>
<dbReference type="GO" id="GO:0160111">
    <property type="term" value="C:axonemal A tubule inner sheath"/>
    <property type="evidence" value="ECO:0000314"/>
    <property type="project" value="MGI"/>
</dbReference>
<dbReference type="GO" id="GO:0005634">
    <property type="term" value="C:nucleus"/>
    <property type="evidence" value="ECO:0007669"/>
    <property type="project" value="UniProtKB-SubCell"/>
</dbReference>
<dbReference type="GO" id="GO:0036126">
    <property type="term" value="C:sperm flagellum"/>
    <property type="evidence" value="ECO:0000314"/>
    <property type="project" value="UniProtKB"/>
</dbReference>
<dbReference type="GO" id="GO:0030317">
    <property type="term" value="P:flagellated sperm motility"/>
    <property type="evidence" value="ECO:0000314"/>
    <property type="project" value="UniProtKB"/>
</dbReference>
<dbReference type="InterPro" id="IPR043246">
    <property type="entry name" value="SPMIP5"/>
</dbReference>
<dbReference type="InterPro" id="IPR055215">
    <property type="entry name" value="SPMIP5_dom"/>
</dbReference>
<dbReference type="PANTHER" id="PTHR47301:SF1">
    <property type="entry name" value="CHROMOSOME 10 OPEN READING FRAME 82"/>
    <property type="match status" value="1"/>
</dbReference>
<dbReference type="PANTHER" id="PTHR47301">
    <property type="entry name" value="HYPOTHETICAL PROTEIN LOC681006"/>
    <property type="match status" value="1"/>
</dbReference>
<dbReference type="Pfam" id="PF22573">
    <property type="entry name" value="SPMIP5"/>
    <property type="match status" value="1"/>
</dbReference>
<accession>Q9CQT6</accession>
<reference key="1">
    <citation type="journal article" date="2005" name="Science">
        <title>The transcriptional landscape of the mammalian genome.</title>
        <authorList>
            <person name="Carninci P."/>
            <person name="Kasukawa T."/>
            <person name="Katayama S."/>
            <person name="Gough J."/>
            <person name="Frith M.C."/>
            <person name="Maeda N."/>
            <person name="Oyama R."/>
            <person name="Ravasi T."/>
            <person name="Lenhard B."/>
            <person name="Wells C."/>
            <person name="Kodzius R."/>
            <person name="Shimokawa K."/>
            <person name="Bajic V.B."/>
            <person name="Brenner S.E."/>
            <person name="Batalov S."/>
            <person name="Forrest A.R."/>
            <person name="Zavolan M."/>
            <person name="Davis M.J."/>
            <person name="Wilming L.G."/>
            <person name="Aidinis V."/>
            <person name="Allen J.E."/>
            <person name="Ambesi-Impiombato A."/>
            <person name="Apweiler R."/>
            <person name="Aturaliya R.N."/>
            <person name="Bailey T.L."/>
            <person name="Bansal M."/>
            <person name="Baxter L."/>
            <person name="Beisel K.W."/>
            <person name="Bersano T."/>
            <person name="Bono H."/>
            <person name="Chalk A.M."/>
            <person name="Chiu K.P."/>
            <person name="Choudhary V."/>
            <person name="Christoffels A."/>
            <person name="Clutterbuck D.R."/>
            <person name="Crowe M.L."/>
            <person name="Dalla E."/>
            <person name="Dalrymple B.P."/>
            <person name="de Bono B."/>
            <person name="Della Gatta G."/>
            <person name="di Bernardo D."/>
            <person name="Down T."/>
            <person name="Engstrom P."/>
            <person name="Fagiolini M."/>
            <person name="Faulkner G."/>
            <person name="Fletcher C.F."/>
            <person name="Fukushima T."/>
            <person name="Furuno M."/>
            <person name="Futaki S."/>
            <person name="Gariboldi M."/>
            <person name="Georgii-Hemming P."/>
            <person name="Gingeras T.R."/>
            <person name="Gojobori T."/>
            <person name="Green R.E."/>
            <person name="Gustincich S."/>
            <person name="Harbers M."/>
            <person name="Hayashi Y."/>
            <person name="Hensch T.K."/>
            <person name="Hirokawa N."/>
            <person name="Hill D."/>
            <person name="Huminiecki L."/>
            <person name="Iacono M."/>
            <person name="Ikeo K."/>
            <person name="Iwama A."/>
            <person name="Ishikawa T."/>
            <person name="Jakt M."/>
            <person name="Kanapin A."/>
            <person name="Katoh M."/>
            <person name="Kawasawa Y."/>
            <person name="Kelso J."/>
            <person name="Kitamura H."/>
            <person name="Kitano H."/>
            <person name="Kollias G."/>
            <person name="Krishnan S.P."/>
            <person name="Kruger A."/>
            <person name="Kummerfeld S.K."/>
            <person name="Kurochkin I.V."/>
            <person name="Lareau L.F."/>
            <person name="Lazarevic D."/>
            <person name="Lipovich L."/>
            <person name="Liu J."/>
            <person name="Liuni S."/>
            <person name="McWilliam S."/>
            <person name="Madan Babu M."/>
            <person name="Madera M."/>
            <person name="Marchionni L."/>
            <person name="Matsuda H."/>
            <person name="Matsuzawa S."/>
            <person name="Miki H."/>
            <person name="Mignone F."/>
            <person name="Miyake S."/>
            <person name="Morris K."/>
            <person name="Mottagui-Tabar S."/>
            <person name="Mulder N."/>
            <person name="Nakano N."/>
            <person name="Nakauchi H."/>
            <person name="Ng P."/>
            <person name="Nilsson R."/>
            <person name="Nishiguchi S."/>
            <person name="Nishikawa S."/>
            <person name="Nori F."/>
            <person name="Ohara O."/>
            <person name="Okazaki Y."/>
            <person name="Orlando V."/>
            <person name="Pang K.C."/>
            <person name="Pavan W.J."/>
            <person name="Pavesi G."/>
            <person name="Pesole G."/>
            <person name="Petrovsky N."/>
            <person name="Piazza S."/>
            <person name="Reed J."/>
            <person name="Reid J.F."/>
            <person name="Ring B.Z."/>
            <person name="Ringwald M."/>
            <person name="Rost B."/>
            <person name="Ruan Y."/>
            <person name="Salzberg S.L."/>
            <person name="Sandelin A."/>
            <person name="Schneider C."/>
            <person name="Schoenbach C."/>
            <person name="Sekiguchi K."/>
            <person name="Semple C.A."/>
            <person name="Seno S."/>
            <person name="Sessa L."/>
            <person name="Sheng Y."/>
            <person name="Shibata Y."/>
            <person name="Shimada H."/>
            <person name="Shimada K."/>
            <person name="Silva D."/>
            <person name="Sinclair B."/>
            <person name="Sperling S."/>
            <person name="Stupka E."/>
            <person name="Sugiura K."/>
            <person name="Sultana R."/>
            <person name="Takenaka Y."/>
            <person name="Taki K."/>
            <person name="Tammoja K."/>
            <person name="Tan S.L."/>
            <person name="Tang S."/>
            <person name="Taylor M.S."/>
            <person name="Tegner J."/>
            <person name="Teichmann S.A."/>
            <person name="Ueda H.R."/>
            <person name="van Nimwegen E."/>
            <person name="Verardo R."/>
            <person name="Wei C.L."/>
            <person name="Yagi K."/>
            <person name="Yamanishi H."/>
            <person name="Zabarovsky E."/>
            <person name="Zhu S."/>
            <person name="Zimmer A."/>
            <person name="Hide W."/>
            <person name="Bult C."/>
            <person name="Grimmond S.M."/>
            <person name="Teasdale R.D."/>
            <person name="Liu E.T."/>
            <person name="Brusic V."/>
            <person name="Quackenbush J."/>
            <person name="Wahlestedt C."/>
            <person name="Mattick J.S."/>
            <person name="Hume D.A."/>
            <person name="Kai C."/>
            <person name="Sasaki D."/>
            <person name="Tomaru Y."/>
            <person name="Fukuda S."/>
            <person name="Kanamori-Katayama M."/>
            <person name="Suzuki M."/>
            <person name="Aoki J."/>
            <person name="Arakawa T."/>
            <person name="Iida J."/>
            <person name="Imamura K."/>
            <person name="Itoh M."/>
            <person name="Kato T."/>
            <person name="Kawaji H."/>
            <person name="Kawagashira N."/>
            <person name="Kawashima T."/>
            <person name="Kojima M."/>
            <person name="Kondo S."/>
            <person name="Konno H."/>
            <person name="Nakano K."/>
            <person name="Ninomiya N."/>
            <person name="Nishio T."/>
            <person name="Okada M."/>
            <person name="Plessy C."/>
            <person name="Shibata K."/>
            <person name="Shiraki T."/>
            <person name="Suzuki S."/>
            <person name="Tagami M."/>
            <person name="Waki K."/>
            <person name="Watahiki A."/>
            <person name="Okamura-Oho Y."/>
            <person name="Suzuki H."/>
            <person name="Kawai J."/>
            <person name="Hayashizaki Y."/>
        </authorList>
    </citation>
    <scope>NUCLEOTIDE SEQUENCE [LARGE SCALE MRNA]</scope>
    <source>
        <strain>C57BL/6J</strain>
        <tissue>Testis</tissue>
    </source>
</reference>
<reference key="2">
    <citation type="journal article" date="2009" name="PLoS Biol.">
        <title>Lineage-specific biology revealed by a finished genome assembly of the mouse.</title>
        <authorList>
            <person name="Church D.M."/>
            <person name="Goodstadt L."/>
            <person name="Hillier L.W."/>
            <person name="Zody M.C."/>
            <person name="Goldstein S."/>
            <person name="She X."/>
            <person name="Bult C.J."/>
            <person name="Agarwala R."/>
            <person name="Cherry J.L."/>
            <person name="DiCuccio M."/>
            <person name="Hlavina W."/>
            <person name="Kapustin Y."/>
            <person name="Meric P."/>
            <person name="Maglott D."/>
            <person name="Birtle Z."/>
            <person name="Marques A.C."/>
            <person name="Graves T."/>
            <person name="Zhou S."/>
            <person name="Teague B."/>
            <person name="Potamousis K."/>
            <person name="Churas C."/>
            <person name="Place M."/>
            <person name="Herschleb J."/>
            <person name="Runnheim R."/>
            <person name="Forrest D."/>
            <person name="Amos-Landgraf J."/>
            <person name="Schwartz D.C."/>
            <person name="Cheng Z."/>
            <person name="Lindblad-Toh K."/>
            <person name="Eichler E.E."/>
            <person name="Ponting C.P."/>
        </authorList>
    </citation>
    <scope>NUCLEOTIDE SEQUENCE [LARGE SCALE GENOMIC DNA]</scope>
    <source>
        <strain>C57BL/6J</strain>
    </source>
</reference>
<reference key="3">
    <citation type="submission" date="2007-06" db="EMBL/GenBank/DDBJ databases">
        <authorList>
            <person name="Mural R.J."/>
            <person name="Adams M.D."/>
            <person name="Myers E.W."/>
            <person name="Smith H.O."/>
            <person name="Venter J.C."/>
        </authorList>
    </citation>
    <scope>NUCLEOTIDE SEQUENCE [LARGE SCALE GENOMIC DNA]</scope>
</reference>
<reference key="4">
    <citation type="journal article" date="2004" name="Genome Res.">
        <title>The status, quality, and expansion of the NIH full-length cDNA project: the Mammalian Gene Collection (MGC).</title>
        <authorList>
            <consortium name="The MGC Project Team"/>
        </authorList>
    </citation>
    <scope>NUCLEOTIDE SEQUENCE [LARGE SCALE MRNA]</scope>
    <source>
        <tissue>Testis</tissue>
    </source>
</reference>
<reference key="5">
    <citation type="journal article" date="2010" name="Cell">
        <title>A tissue-specific atlas of mouse protein phosphorylation and expression.</title>
        <authorList>
            <person name="Huttlin E.L."/>
            <person name="Jedrychowski M.P."/>
            <person name="Elias J.E."/>
            <person name="Goswami T."/>
            <person name="Rad R."/>
            <person name="Beausoleil S.A."/>
            <person name="Villen J."/>
            <person name="Haas W."/>
            <person name="Sowa M.E."/>
            <person name="Gygi S.P."/>
        </authorList>
    </citation>
    <scope>IDENTIFICATION BY MASS SPECTROMETRY [LARGE SCALE ANALYSIS]</scope>
    <source>
        <tissue>Testis</tissue>
    </source>
</reference>
<reference key="6">
    <citation type="journal article" date="2015" name="Biol. Reprod.">
        <title>Combining RNA and protein profiling data with network interactions identifies genes associated with spermatogenesis in mouse and human.</title>
        <authorList>
            <person name="Petit F.G."/>
            <person name="Kervarrec C."/>
            <person name="Jamin S.P."/>
            <person name="Smagulova F."/>
            <person name="Hao C."/>
            <person name="Becker E."/>
            <person name="Jegou B."/>
            <person name="Chalmel F."/>
            <person name="Primig M."/>
        </authorList>
    </citation>
    <scope>TISSUE SPECIFICITY</scope>
    <scope>SUBCELLULAR LOCATION</scope>
</reference>
<reference evidence="7" key="7">
    <citation type="journal article" date="2023" name="Cell">
        <title>Structures of sperm flagellar doublet microtubules expand the genetic spectrum of male infertility.</title>
        <authorList>
            <person name="Zhou L."/>
            <person name="Liu H."/>
            <person name="Liu S."/>
            <person name="Yang X."/>
            <person name="Dong Y."/>
            <person name="Pan Y."/>
            <person name="Xiao Z."/>
            <person name="Zheng B."/>
            <person name="Sun Y."/>
            <person name="Huang P."/>
            <person name="Zhang X."/>
            <person name="Hu J."/>
            <person name="Sun R."/>
            <person name="Feng S."/>
            <person name="Zhu Y."/>
            <person name="Liu M."/>
            <person name="Gui M."/>
            <person name="Wu J."/>
        </authorList>
    </citation>
    <scope>STRUCTURE BY ELECTRON MICROSCOPY (3.50 ANGSTROMS) OF SPERM FLAGELLAR DOUBLET MICROTUBULES</scope>
    <scope>FUNCTION</scope>
    <scope>SUBCELLULAR LOCATION</scope>
    <scope>SUBUNIT</scope>
</reference>
<comment type="function">
    <text evidence="4">Microtubule inner protein (MIP) part of the dynein-decorated doublet microtubules (DMTs) in flagellum axoneme (PubMed:37295417). May serve to reinforce and thus stabilize the microtubule structure in the sperm flagella (PubMed:37295417).</text>
</comment>
<comment type="subunit">
    <text evidence="4">Microtubule inner protein component of sperm flagellar doublet microtubules.</text>
</comment>
<comment type="subcellular location">
    <subcellularLocation>
        <location evidence="4">Cytoplasm</location>
        <location evidence="4">Cytoskeleton</location>
        <location evidence="4">Flagellum axoneme</location>
    </subcellularLocation>
    <subcellularLocation>
        <location evidence="3">Cytoplasm</location>
    </subcellularLocation>
    <subcellularLocation>
        <location evidence="3">Nucleus</location>
    </subcellularLocation>
    <text evidence="1 3">Localizes to the A-tubules of DMTs (By similarity). Located in the cytoplasm of spermatocytes and the nuclei of round spermatids and elongated spermatids (PubMed:25609838).</text>
</comment>
<comment type="tissue specificity">
    <text evidence="3">Expressed in testis (at protein level).</text>
</comment>
<comment type="sequence caution" evidence="6">
    <conflict type="erroneous initiation">
        <sequence resource="EMBL-CDS" id="AAH49561"/>
    </conflict>
    <text>Extended N-terminus.</text>
</comment>
<comment type="sequence caution" evidence="6">
    <conflict type="erroneous initiation">
        <sequence resource="EMBL-CDS" id="BAB24426"/>
    </conflict>
    <text>Extended N-terminus.</text>
</comment>
<comment type="sequence caution" evidence="6">
    <conflict type="erroneous initiation">
        <sequence resource="EMBL-CDS" id="BAB24581"/>
    </conflict>
    <text>Extended N-terminus.</text>
</comment>